<accession>B8MWJ5</accession>
<comment type="function">
    <text evidence="1">Hydrolyzes a variety of simple alpha-D-galactoside as well as more complex molecules such as oligosaccharides and polysaccharides.</text>
</comment>
<comment type="catalytic activity">
    <reaction>
        <text>Hydrolysis of terminal, non-reducing alpha-D-galactose residues in alpha-D-galactosides, including galactose oligosaccharides, galactomannans and galactolipids.</text>
        <dbReference type="EC" id="3.2.1.22"/>
    </reaction>
</comment>
<comment type="subcellular location">
    <subcellularLocation>
        <location evidence="1">Secreted</location>
    </subcellularLocation>
</comment>
<comment type="similarity">
    <text evidence="4">Belongs to the glycosyl hydrolase 27 family.</text>
</comment>
<evidence type="ECO:0000250" key="1"/>
<evidence type="ECO:0000255" key="2"/>
<evidence type="ECO:0000255" key="3">
    <source>
        <dbReference type="PROSITE-ProRule" id="PRU00174"/>
    </source>
</evidence>
<evidence type="ECO:0000305" key="4"/>
<organism>
    <name type="scientific">Aspergillus flavus (strain ATCC 200026 / FGSC A1120 / IAM 13836 / NRRL 3357 / JCM 12722 / SRRC 167)</name>
    <dbReference type="NCBI Taxonomy" id="332952"/>
    <lineage>
        <taxon>Eukaryota</taxon>
        <taxon>Fungi</taxon>
        <taxon>Dikarya</taxon>
        <taxon>Ascomycota</taxon>
        <taxon>Pezizomycotina</taxon>
        <taxon>Eurotiomycetes</taxon>
        <taxon>Eurotiomycetidae</taxon>
        <taxon>Eurotiales</taxon>
        <taxon>Aspergillaceae</taxon>
        <taxon>Aspergillus</taxon>
        <taxon>Aspergillus subgen. Circumdati</taxon>
    </lineage>
</organism>
<gene>
    <name type="primary">aglA</name>
    <name type="ORF">AFLA_074520</name>
</gene>
<name>AGALA_ASPFN</name>
<feature type="signal peptide" evidence="2">
    <location>
        <begin position="1"/>
        <end position="25"/>
    </location>
</feature>
<feature type="chain" id="PRO_0000393208" description="Probable alpha-galactosidase A">
    <location>
        <begin position="26"/>
        <end position="534"/>
    </location>
</feature>
<feature type="domain" description="Ricin B-type lectin" evidence="3">
    <location>
        <begin position="413"/>
        <end position="534"/>
    </location>
</feature>
<feature type="active site" description="Nucleophile" evidence="1">
    <location>
        <position position="155"/>
    </location>
</feature>
<feature type="active site" description="Proton donor" evidence="1">
    <location>
        <position position="213"/>
    </location>
</feature>
<feature type="glycosylation site" description="N-linked (GlcNAc...) asparagine" evidence="2">
    <location>
        <position position="50"/>
    </location>
</feature>
<feature type="glycosylation site" description="N-linked (GlcNAc...) asparagine" evidence="2">
    <location>
        <position position="88"/>
    </location>
</feature>
<feature type="glycosylation site" description="N-linked (GlcNAc...) asparagine" evidence="2">
    <location>
        <position position="94"/>
    </location>
</feature>
<feature type="glycosylation site" description="N-linked (GlcNAc...) asparagine" evidence="2">
    <location>
        <position position="124"/>
    </location>
</feature>
<feature type="glycosylation site" description="N-linked (GlcNAc...) asparagine" evidence="2">
    <location>
        <position position="204"/>
    </location>
</feature>
<feature type="glycosylation site" description="N-linked (GlcNAc...) asparagine" evidence="2">
    <location>
        <position position="444"/>
    </location>
</feature>
<feature type="disulfide bond" evidence="3">
    <location>
        <begin position="47"/>
        <end position="79"/>
    </location>
</feature>
<feature type="disulfide bond" evidence="3">
    <location>
        <begin position="127"/>
        <end position="157"/>
    </location>
</feature>
<feature type="disulfide bond" evidence="3">
    <location>
        <begin position="430"/>
        <end position="443"/>
    </location>
</feature>
<feature type="disulfide bond" evidence="3">
    <location>
        <begin position="468"/>
        <end position="481"/>
    </location>
</feature>
<dbReference type="EC" id="3.2.1.22"/>
<dbReference type="EMBL" id="EQ963472">
    <property type="protein sequence ID" value="EED56758.1"/>
    <property type="molecule type" value="Genomic_DNA"/>
</dbReference>
<dbReference type="RefSeq" id="XP_002372370.1">
    <property type="nucleotide sequence ID" value="XM_002372329.1"/>
</dbReference>
<dbReference type="SMR" id="B8MWJ5"/>
<dbReference type="STRING" id="332952.B8MWJ5"/>
<dbReference type="GlyCosmos" id="B8MWJ5">
    <property type="glycosylation" value="6 sites, No reported glycans"/>
</dbReference>
<dbReference type="EnsemblFungi" id="EED56758">
    <property type="protein sequence ID" value="EED56758"/>
    <property type="gene ID" value="AFLA_074520"/>
</dbReference>
<dbReference type="VEuPathDB" id="FungiDB:AFLA_003000"/>
<dbReference type="eggNOG" id="KOG2366">
    <property type="taxonomic scope" value="Eukaryota"/>
</dbReference>
<dbReference type="HOGENOM" id="CLU_013093_3_3_1"/>
<dbReference type="OMA" id="NWARFMC"/>
<dbReference type="GO" id="GO:0005576">
    <property type="term" value="C:extracellular region"/>
    <property type="evidence" value="ECO:0007669"/>
    <property type="project" value="UniProtKB-SubCell"/>
</dbReference>
<dbReference type="GO" id="GO:0004557">
    <property type="term" value="F:alpha-galactosidase activity"/>
    <property type="evidence" value="ECO:0007669"/>
    <property type="project" value="UniProtKB-EC"/>
</dbReference>
<dbReference type="GO" id="GO:0030246">
    <property type="term" value="F:carbohydrate binding"/>
    <property type="evidence" value="ECO:0007669"/>
    <property type="project" value="UniProtKB-KW"/>
</dbReference>
<dbReference type="GO" id="GO:0005975">
    <property type="term" value="P:carbohydrate metabolic process"/>
    <property type="evidence" value="ECO:0007669"/>
    <property type="project" value="InterPro"/>
</dbReference>
<dbReference type="CDD" id="cd23425">
    <property type="entry name" value="beta-trefoil_Ricin_AglA"/>
    <property type="match status" value="1"/>
</dbReference>
<dbReference type="CDD" id="cd14792">
    <property type="entry name" value="GH27"/>
    <property type="match status" value="1"/>
</dbReference>
<dbReference type="FunFam" id="3.20.20.70:FF:000177">
    <property type="entry name" value="Alpha-galactosidase"/>
    <property type="match status" value="1"/>
</dbReference>
<dbReference type="Gene3D" id="2.80.10.50">
    <property type="match status" value="1"/>
</dbReference>
<dbReference type="Gene3D" id="3.20.20.70">
    <property type="entry name" value="Aldolase class I"/>
    <property type="match status" value="1"/>
</dbReference>
<dbReference type="Gene3D" id="2.60.40.1180">
    <property type="entry name" value="Golgi alpha-mannosidase II"/>
    <property type="match status" value="1"/>
</dbReference>
<dbReference type="InterPro" id="IPR013785">
    <property type="entry name" value="Aldolase_TIM"/>
</dbReference>
<dbReference type="InterPro" id="IPR002241">
    <property type="entry name" value="Glyco_hydro_27"/>
</dbReference>
<dbReference type="InterPro" id="IPR013780">
    <property type="entry name" value="Glyco_hydro_b"/>
</dbReference>
<dbReference type="InterPro" id="IPR017853">
    <property type="entry name" value="Glycoside_hydrolase_SF"/>
</dbReference>
<dbReference type="InterPro" id="IPR041233">
    <property type="entry name" value="Melibiase_C"/>
</dbReference>
<dbReference type="InterPro" id="IPR035992">
    <property type="entry name" value="Ricin_B-like_lectins"/>
</dbReference>
<dbReference type="InterPro" id="IPR000772">
    <property type="entry name" value="Ricin_B_lectin"/>
</dbReference>
<dbReference type="PANTHER" id="PTHR11452:SF91">
    <property type="entry name" value="ALPHA-GALACTOSIDASE A-RELATED"/>
    <property type="match status" value="1"/>
</dbReference>
<dbReference type="PANTHER" id="PTHR11452">
    <property type="entry name" value="ALPHA-GALACTOSIDASE/ALPHA-N-ACETYLGALACTOSAMINIDASE"/>
    <property type="match status" value="1"/>
</dbReference>
<dbReference type="Pfam" id="PF16499">
    <property type="entry name" value="Melibiase_2"/>
    <property type="match status" value="1"/>
</dbReference>
<dbReference type="Pfam" id="PF17801">
    <property type="entry name" value="Melibiase_C"/>
    <property type="match status" value="1"/>
</dbReference>
<dbReference type="Pfam" id="PF00652">
    <property type="entry name" value="Ricin_B_lectin"/>
    <property type="match status" value="1"/>
</dbReference>
<dbReference type="PRINTS" id="PR00740">
    <property type="entry name" value="GLHYDRLASE27"/>
</dbReference>
<dbReference type="SMART" id="SM00458">
    <property type="entry name" value="RICIN"/>
    <property type="match status" value="1"/>
</dbReference>
<dbReference type="SUPFAM" id="SSF51445">
    <property type="entry name" value="(Trans)glycosidases"/>
    <property type="match status" value="1"/>
</dbReference>
<dbReference type="SUPFAM" id="SSF51011">
    <property type="entry name" value="Glycosyl hydrolase domain"/>
    <property type="match status" value="1"/>
</dbReference>
<dbReference type="SUPFAM" id="SSF50370">
    <property type="entry name" value="Ricin B-like lectins"/>
    <property type="match status" value="1"/>
</dbReference>
<dbReference type="PROSITE" id="PS50231">
    <property type="entry name" value="RICIN_B_LECTIN"/>
    <property type="match status" value="1"/>
</dbReference>
<sequence>MRLITRWIPLANALASTMPVQVVASIENPSLLPTPPMGFNNWARFMCDLNETLFVETTDAMASNGLLEAGYNRINLDDCWMNYDRAENGSLEWNVTKFPRGLPWLGQYVKSKGFNFGIYEDSGNLTCGGYPGSEGYEEIDAETFAAWGIDYLKLDGCNVYPKEGRTLQEEYKYLYGNWHEILSKMQQPLIFSESAPAYFSMTDNLTDWHTVMDWVPEYGELARHSVDILVYSGEGSAWDSIMTNYKFNTLVARYQRPGYYNDPDFLIADHPGLSLDEKRSQFALWASFSAPLIISAHIPDLSSEDLEYLTNQALIAVDQDPLAQQATLASRDGSLDVLTRNLADGSRLVTILNHGSESIETDISLDILGLSTDCTYKAQDLWGGSTQTIKDAIRIKLNTHATAVYKIDTDEKCSQVIPTGLIFNTASGKCLTGTSSSVGSESCNGSKSQIWQIDASGVIRTLSEQSKCLTADGKAISLQECSENNGQKWSYAITGNLKNADTGYCLTNGGGVSACGFETNSQVFGLPAGVHVAL</sequence>
<keyword id="KW-1015">Disulfide bond</keyword>
<keyword id="KW-0325">Glycoprotein</keyword>
<keyword id="KW-0326">Glycosidase</keyword>
<keyword id="KW-0378">Hydrolase</keyword>
<keyword id="KW-0430">Lectin</keyword>
<keyword id="KW-0964">Secreted</keyword>
<keyword id="KW-0732">Signal</keyword>
<reference key="1">
    <citation type="journal article" date="2015" name="Genome Announc.">
        <title>Genome sequence of Aspergillus flavus NRRL 3357, a strain that causes aflatoxin contamination of food and feed.</title>
        <authorList>
            <person name="Nierman W.C."/>
            <person name="Yu J."/>
            <person name="Fedorova-Abrams N.D."/>
            <person name="Losada L."/>
            <person name="Cleveland T.E."/>
            <person name="Bhatnagar D."/>
            <person name="Bennett J.W."/>
            <person name="Dean R."/>
            <person name="Payne G.A."/>
        </authorList>
    </citation>
    <scope>NUCLEOTIDE SEQUENCE [LARGE SCALE GENOMIC DNA]</scope>
    <source>
        <strain>ATCC 200026 / FGSC A1120 / IAM 13836 / NRRL 3357 / JCM 12722 / SRRC 167</strain>
    </source>
</reference>
<proteinExistence type="inferred from homology"/>
<protein>
    <recommendedName>
        <fullName>Probable alpha-galactosidase A</fullName>
        <ecNumber>3.2.1.22</ecNumber>
    </recommendedName>
    <alternativeName>
        <fullName>Melibiase A</fullName>
    </alternativeName>
</protein>